<proteinExistence type="inferred from homology"/>
<evidence type="ECO:0000255" key="1">
    <source>
        <dbReference type="HAMAP-Rule" id="MF_01393"/>
    </source>
</evidence>
<gene>
    <name evidence="1" type="primary">atpB1</name>
    <name type="ordered locus">BBta_0846</name>
</gene>
<name>ATP61_BRASB</name>
<comment type="function">
    <text evidence="1">Key component of the proton channel; it plays a direct role in the translocation of protons across the membrane.</text>
</comment>
<comment type="subunit">
    <text evidence="1">F-type ATPases have 2 components, CF(1) - the catalytic core - and CF(0) - the membrane proton channel. CF(1) has five subunits: alpha(3), beta(3), gamma(1), delta(1), epsilon(1). CF(0) has four main subunits: a, b, b' and c.</text>
</comment>
<comment type="subcellular location">
    <subcellularLocation>
        <location evidence="1">Cell inner membrane</location>
        <topology evidence="1">Multi-pass membrane protein</topology>
    </subcellularLocation>
</comment>
<comment type="similarity">
    <text evidence="1">Belongs to the ATPase A chain family.</text>
</comment>
<dbReference type="EMBL" id="CP000494">
    <property type="protein sequence ID" value="ABQ33108.1"/>
    <property type="molecule type" value="Genomic_DNA"/>
</dbReference>
<dbReference type="RefSeq" id="WP_012041158.1">
    <property type="nucleotide sequence ID" value="NC_009485.1"/>
</dbReference>
<dbReference type="SMR" id="A5EAB4"/>
<dbReference type="STRING" id="288000.BBta_0846"/>
<dbReference type="KEGG" id="bbt:BBta_0846"/>
<dbReference type="eggNOG" id="COG0356">
    <property type="taxonomic scope" value="Bacteria"/>
</dbReference>
<dbReference type="HOGENOM" id="CLU_041018_0_2_5"/>
<dbReference type="OrthoDB" id="9809130at2"/>
<dbReference type="Proteomes" id="UP000000246">
    <property type="component" value="Chromosome"/>
</dbReference>
<dbReference type="GO" id="GO:0005886">
    <property type="term" value="C:plasma membrane"/>
    <property type="evidence" value="ECO:0007669"/>
    <property type="project" value="UniProtKB-SubCell"/>
</dbReference>
<dbReference type="GO" id="GO:0045259">
    <property type="term" value="C:proton-transporting ATP synthase complex"/>
    <property type="evidence" value="ECO:0007669"/>
    <property type="project" value="UniProtKB-KW"/>
</dbReference>
<dbReference type="GO" id="GO:0046933">
    <property type="term" value="F:proton-transporting ATP synthase activity, rotational mechanism"/>
    <property type="evidence" value="ECO:0007669"/>
    <property type="project" value="UniProtKB-UniRule"/>
</dbReference>
<dbReference type="CDD" id="cd00310">
    <property type="entry name" value="ATP-synt_Fo_a_6"/>
    <property type="match status" value="1"/>
</dbReference>
<dbReference type="FunFam" id="1.20.120.220:FF:000003">
    <property type="entry name" value="ATP synthase subunit a"/>
    <property type="match status" value="1"/>
</dbReference>
<dbReference type="Gene3D" id="1.20.120.220">
    <property type="entry name" value="ATP synthase, F0 complex, subunit A"/>
    <property type="match status" value="1"/>
</dbReference>
<dbReference type="HAMAP" id="MF_01393">
    <property type="entry name" value="ATP_synth_a_bact"/>
    <property type="match status" value="1"/>
</dbReference>
<dbReference type="InterPro" id="IPR000568">
    <property type="entry name" value="ATP_synth_F0_asu"/>
</dbReference>
<dbReference type="InterPro" id="IPR023011">
    <property type="entry name" value="ATP_synth_F0_asu_AS"/>
</dbReference>
<dbReference type="InterPro" id="IPR045083">
    <property type="entry name" value="ATP_synth_F0_asu_bact/mt"/>
</dbReference>
<dbReference type="InterPro" id="IPR035908">
    <property type="entry name" value="F0_ATP_A_sf"/>
</dbReference>
<dbReference type="NCBIfam" id="TIGR01131">
    <property type="entry name" value="ATP_synt_6_or_A"/>
    <property type="match status" value="1"/>
</dbReference>
<dbReference type="NCBIfam" id="NF004482">
    <property type="entry name" value="PRK05815.2-4"/>
    <property type="match status" value="1"/>
</dbReference>
<dbReference type="PANTHER" id="PTHR11410">
    <property type="entry name" value="ATP SYNTHASE SUBUNIT A"/>
    <property type="match status" value="1"/>
</dbReference>
<dbReference type="PANTHER" id="PTHR11410:SF0">
    <property type="entry name" value="ATP SYNTHASE SUBUNIT A"/>
    <property type="match status" value="1"/>
</dbReference>
<dbReference type="Pfam" id="PF00119">
    <property type="entry name" value="ATP-synt_A"/>
    <property type="match status" value="1"/>
</dbReference>
<dbReference type="PRINTS" id="PR00123">
    <property type="entry name" value="ATPASEA"/>
</dbReference>
<dbReference type="SUPFAM" id="SSF81336">
    <property type="entry name" value="F1F0 ATP synthase subunit A"/>
    <property type="match status" value="1"/>
</dbReference>
<dbReference type="PROSITE" id="PS00449">
    <property type="entry name" value="ATPASE_A"/>
    <property type="match status" value="1"/>
</dbReference>
<accession>A5EAB4</accession>
<reference key="1">
    <citation type="journal article" date="2007" name="Science">
        <title>Legumes symbioses: absence of nod genes in photosynthetic bradyrhizobia.</title>
        <authorList>
            <person name="Giraud E."/>
            <person name="Moulin L."/>
            <person name="Vallenet D."/>
            <person name="Barbe V."/>
            <person name="Cytryn E."/>
            <person name="Avarre J.-C."/>
            <person name="Jaubert M."/>
            <person name="Simon D."/>
            <person name="Cartieaux F."/>
            <person name="Prin Y."/>
            <person name="Bena G."/>
            <person name="Hannibal L."/>
            <person name="Fardoux J."/>
            <person name="Kojadinovic M."/>
            <person name="Vuillet L."/>
            <person name="Lajus A."/>
            <person name="Cruveiller S."/>
            <person name="Rouy Z."/>
            <person name="Mangenot S."/>
            <person name="Segurens B."/>
            <person name="Dossat C."/>
            <person name="Franck W.L."/>
            <person name="Chang W.-S."/>
            <person name="Saunders E."/>
            <person name="Bruce D."/>
            <person name="Richardson P."/>
            <person name="Normand P."/>
            <person name="Dreyfus B."/>
            <person name="Pignol D."/>
            <person name="Stacey G."/>
            <person name="Emerich D."/>
            <person name="Vermeglio A."/>
            <person name="Medigue C."/>
            <person name="Sadowsky M."/>
        </authorList>
    </citation>
    <scope>NUCLEOTIDE SEQUENCE [LARGE SCALE GENOMIC DNA]</scope>
    <source>
        <strain>BTAi1 / ATCC BAA-1182</strain>
    </source>
</reference>
<organism>
    <name type="scientific">Bradyrhizobium sp. (strain BTAi1 / ATCC BAA-1182)</name>
    <dbReference type="NCBI Taxonomy" id="288000"/>
    <lineage>
        <taxon>Bacteria</taxon>
        <taxon>Pseudomonadati</taxon>
        <taxon>Pseudomonadota</taxon>
        <taxon>Alphaproteobacteria</taxon>
        <taxon>Hyphomicrobiales</taxon>
        <taxon>Nitrobacteraceae</taxon>
        <taxon>Bradyrhizobium</taxon>
    </lineage>
</organism>
<protein>
    <recommendedName>
        <fullName evidence="1">ATP synthase subunit a 1</fullName>
    </recommendedName>
    <alternativeName>
        <fullName evidence="1">ATP synthase F0 sector subunit a 1</fullName>
    </alternativeName>
    <alternativeName>
        <fullName evidence="1">F-ATPase subunit 6 1</fullName>
    </alternativeName>
</protein>
<feature type="chain" id="PRO_0000362249" description="ATP synthase subunit a 1">
    <location>
        <begin position="1"/>
        <end position="247"/>
    </location>
</feature>
<feature type="transmembrane region" description="Helical" evidence="1">
    <location>
        <begin position="32"/>
        <end position="52"/>
    </location>
</feature>
<feature type="transmembrane region" description="Helical" evidence="1">
    <location>
        <begin position="82"/>
        <end position="102"/>
    </location>
</feature>
<feature type="transmembrane region" description="Helical" evidence="1">
    <location>
        <begin position="112"/>
        <end position="132"/>
    </location>
</feature>
<feature type="transmembrane region" description="Helical" evidence="1">
    <location>
        <begin position="141"/>
        <end position="161"/>
    </location>
</feature>
<feature type="transmembrane region" description="Helical" evidence="1">
    <location>
        <begin position="181"/>
        <end position="201"/>
    </location>
</feature>
<feature type="transmembrane region" description="Helical" evidence="1">
    <location>
        <begin position="206"/>
        <end position="226"/>
    </location>
</feature>
<keyword id="KW-0066">ATP synthesis</keyword>
<keyword id="KW-0997">Cell inner membrane</keyword>
<keyword id="KW-1003">Cell membrane</keyword>
<keyword id="KW-0138">CF(0)</keyword>
<keyword id="KW-0375">Hydrogen ion transport</keyword>
<keyword id="KW-0406">Ion transport</keyword>
<keyword id="KW-0472">Membrane</keyword>
<keyword id="KW-1185">Reference proteome</keyword>
<keyword id="KW-0812">Transmembrane</keyword>
<keyword id="KW-1133">Transmembrane helix</keyword>
<keyword id="KW-0813">Transport</keyword>
<sequence length="247" mass="26970">MIDPIHQFHLNKIFTIGHIGNQEIAFTNSTAYMLLAVVLIAGMMLAAGRALVPGRFQSVVELSYEFVANTLRTSAGSHGMTFFPLVFSLFMFIFVSNIVGIIPYTFTVSSHIIVTFSLALLVFLTVIIYGFYKNGLKFFKLFVPSGIPAVILPLVVVIEIISFFSRPISHSVRLFANMLAGHVTLKVFASFVTMLGALGFVGKVGALLPLGLTVALTGLELMVAFLQAYVFTILTCIYLNDAIHPGH</sequence>